<proteinExistence type="evidence at transcript level"/>
<keyword id="KW-0156">Chromatin regulator</keyword>
<keyword id="KW-0963">Cytoplasm</keyword>
<keyword id="KW-0223">Dioxygenase</keyword>
<keyword id="KW-0408">Iron</keyword>
<keyword id="KW-0479">Metal-binding</keyword>
<keyword id="KW-0539">Nucleus</keyword>
<keyword id="KW-0560">Oxidoreductase</keyword>
<keyword id="KW-1185">Reference proteome</keyword>
<keyword id="KW-0804">Transcription</keyword>
<keyword id="KW-0805">Transcription regulation</keyword>
<keyword id="KW-0862">Zinc</keyword>
<keyword id="KW-0863">Zinc-finger</keyword>
<feature type="chain" id="PRO_0000234370" description="Lysine-specific demethylase 3A">
    <location>
        <begin position="1"/>
        <end position="1325"/>
    </location>
</feature>
<feature type="domain" description="JmjC" evidence="4">
    <location>
        <begin position="1062"/>
        <end position="1285"/>
    </location>
</feature>
<feature type="zinc finger region" description="C6-type" evidence="3">
    <location>
        <begin position="669"/>
        <end position="694"/>
    </location>
</feature>
<feature type="region of interest" description="Disordered" evidence="5">
    <location>
        <begin position="249"/>
        <end position="284"/>
    </location>
</feature>
<feature type="region of interest" description="Disordered" evidence="5">
    <location>
        <begin position="300"/>
        <end position="333"/>
    </location>
</feature>
<feature type="region of interest" description="Disordered" evidence="5">
    <location>
        <begin position="372"/>
        <end position="399"/>
    </location>
</feature>
<feature type="region of interest" description="Disordered" evidence="5">
    <location>
        <begin position="772"/>
        <end position="791"/>
    </location>
</feature>
<feature type="region of interest" description="Disordered" evidence="5">
    <location>
        <begin position="798"/>
        <end position="819"/>
    </location>
</feature>
<feature type="short sequence motif" description="LXXLL motif">
    <location>
        <begin position="888"/>
        <end position="892"/>
    </location>
</feature>
<feature type="compositionally biased region" description="Polar residues" evidence="5">
    <location>
        <begin position="274"/>
        <end position="283"/>
    </location>
</feature>
<feature type="compositionally biased region" description="Low complexity" evidence="5">
    <location>
        <begin position="378"/>
        <end position="390"/>
    </location>
</feature>
<feature type="binding site" evidence="4">
    <location>
        <position position="1124"/>
    </location>
    <ligand>
        <name>Fe cation</name>
        <dbReference type="ChEBI" id="CHEBI:24875"/>
        <note>catalytic</note>
    </ligand>
</feature>
<feature type="binding site" evidence="4">
    <location>
        <position position="1126"/>
    </location>
    <ligand>
        <name>Fe cation</name>
        <dbReference type="ChEBI" id="CHEBI:24875"/>
        <note>catalytic</note>
    </ligand>
</feature>
<feature type="binding site" evidence="4">
    <location>
        <position position="1253"/>
    </location>
    <ligand>
        <name>Fe cation</name>
        <dbReference type="ChEBI" id="CHEBI:24875"/>
        <note>catalytic</note>
    </ligand>
</feature>
<gene>
    <name type="primary">KDM3A</name>
    <name type="synonym">JHDM2A</name>
    <name type="synonym">JMJD1A</name>
    <name type="ORF">RCJMB04_22o22</name>
</gene>
<protein>
    <recommendedName>
        <fullName>Lysine-specific demethylase 3A</fullName>
        <ecNumber evidence="2">1.14.11.65</ecNumber>
    </recommendedName>
    <alternativeName>
        <fullName>JmjC domain-containing histone demethylation protein 2A</fullName>
    </alternativeName>
    <alternativeName>
        <fullName>Jumonji domain-containing protein 1A</fullName>
    </alternativeName>
    <alternativeName>
        <fullName evidence="6">[histone H3]-dimethyl-L-lysine(9) demethylase 3A</fullName>
    </alternativeName>
</protein>
<sequence>MVLRLEGSWSLLVGKRFLSLSGDDDGPWDTERVAEWPWQAGRIRAVSHTDISKPDLKICVEFDDESWEKRRWIEVYSPKMKVFLVEQKLVLAERRSHGGSISPVQWPAMTYKSLVDKAGLGPMVSIRYLGEEKCVFLSKDLLTPIQDVESSRLPLKDDQTVNEEIQALVKKHLDETRLVQGGKNIIGSKIRIYSLDPSTQWFTAVVVNGNPATRTLEVNCQEIPALKTLDPELIHVEIIYDNNGKCDKSKRIGGVKRKPSENSGSVDAKHTKSSPEVSQSQGHVHSVPTVFGEALLGCTPANKDQRHQGLPLPANSPPNLGAETPQGTCRRSVPEVHPSCLNAGTKPLKENLTLFPKVTYITKEQTQNINDQNGKYTSLISSRSSSLSDSTNGKETGLKNISEPLLKPTTNFPKECISAKPLQHLNSSIAIPRVNSSVELQRTLDCRPSTSDAHLLPFTEAGVRSHSGSNSQKGNKVDEHVEMEFFTRRNSNEAFYERNENESFWTGSTKIQDNVIVRKSILADASKVKKLQQSGEAFVQDGSCNNIAPHLHKCRECRLDSYRKNKDQKDSTVFCRFFHFRRLQFNKHGILREEGFLTPNKYDPEAISLWLPLSKNVVGLDLDTAKYILANIGDHFCQLVISEKEVMSTIEPHRQVAWKRAVRGVREMCDVCDTTIFNLRWVCSKCGFGVCVDCYRMRKKGIHEDDDSDTFSWFKCVKGQEHEPENLMPTQIIPGRALYDVGDIVHSVRTKWGIKANCPCANKQFKALSKPTLKEDSKQNLVPGERTSLQQSNLVLSPQLPTHEPPVKPAAGSKQTASVTTSPSLSWLSNITSGNVNKENKEKLLVPISKNENKALQTLPSLAKPAAALQTFNSAILTPVSNNNTGFLRNLLNSSGGKTDNGLKSTPKILDDIFASLVQNRTVTDMPKKPQGLTIKPTIMGFDTPHYWLCDNRLLCLQDPNNESNWNVFRECWKQGQPVMVSGVHHKLNADLWRPESFRKEFGQQEVDLVNCRTNEIITGATVGDFWDGFEDISSRLRTEEGEPMVLKLKDWPPGEDFRDMMPSRFDDLMKNIPLPEYTRRGGKLNLASRLPNYFVRPDLGPKMYNAYGLITPEDRKYGTTNLHLDVSDAANVMVYVGIPKGQADQEEEVLKTIQDGDSDELTIKRFTESREKPGALWHIYAAKDTEKIREFLKKVAEEQGQENPVDHDPIHDQSWYLDRSLRKRLHQEYGVQGWAIVQFLGDVVFIPAGAPHQVHNLYSCIKVAEDFVSPEHVKHCFWLTQEFRYLSHTHTNHEDKLQVKNVIYHAVKDAVGILRANESSLSRS</sequence>
<accession>Q5ZIX8</accession>
<reference key="1">
    <citation type="journal article" date="2005" name="Genome Biol.">
        <title>Full-length cDNAs from chicken bursal lymphocytes to facilitate gene function analysis.</title>
        <authorList>
            <person name="Caldwell R.B."/>
            <person name="Kierzek A.M."/>
            <person name="Arakawa H."/>
            <person name="Bezzubov Y."/>
            <person name="Zaim J."/>
            <person name="Fiedler P."/>
            <person name="Kutter S."/>
            <person name="Blagodatski A."/>
            <person name="Kostovska D."/>
            <person name="Koter M."/>
            <person name="Plachy J."/>
            <person name="Carninci P."/>
            <person name="Hayashizaki Y."/>
            <person name="Buerstedde J.-M."/>
        </authorList>
    </citation>
    <scope>NUCLEOTIDE SEQUENCE [LARGE SCALE MRNA]</scope>
    <source>
        <strain>CB</strain>
        <tissue>Bursa of Fabricius</tissue>
    </source>
</reference>
<dbReference type="EC" id="1.14.11.65" evidence="2"/>
<dbReference type="EMBL" id="AJ720656">
    <property type="protein sequence ID" value="CAG32315.1"/>
    <property type="molecule type" value="mRNA"/>
</dbReference>
<dbReference type="RefSeq" id="NP_001012909.1">
    <property type="nucleotide sequence ID" value="NM_001012891.1"/>
</dbReference>
<dbReference type="SMR" id="Q5ZIX8"/>
<dbReference type="FunCoup" id="Q5ZIX8">
    <property type="interactions" value="483"/>
</dbReference>
<dbReference type="STRING" id="9031.ENSGALP00000036346"/>
<dbReference type="PaxDb" id="9031-ENSGALP00000036346"/>
<dbReference type="GeneID" id="422917"/>
<dbReference type="KEGG" id="gga:422917"/>
<dbReference type="CTD" id="55818"/>
<dbReference type="VEuPathDB" id="HostDB:geneid_422917"/>
<dbReference type="eggNOG" id="KOG1356">
    <property type="taxonomic scope" value="Eukaryota"/>
</dbReference>
<dbReference type="InParanoid" id="Q5ZIX8"/>
<dbReference type="OrthoDB" id="1667110at2759"/>
<dbReference type="PhylomeDB" id="Q5ZIX8"/>
<dbReference type="PRO" id="PR:Q5ZIX8"/>
<dbReference type="Proteomes" id="UP000000539">
    <property type="component" value="Unassembled WGS sequence"/>
</dbReference>
<dbReference type="GO" id="GO:0000785">
    <property type="term" value="C:chromatin"/>
    <property type="evidence" value="ECO:0000318"/>
    <property type="project" value="GO_Central"/>
</dbReference>
<dbReference type="GO" id="GO:0005737">
    <property type="term" value="C:cytoplasm"/>
    <property type="evidence" value="ECO:0007669"/>
    <property type="project" value="UniProtKB-SubCell"/>
</dbReference>
<dbReference type="GO" id="GO:0000118">
    <property type="term" value="C:histone deacetylase complex"/>
    <property type="evidence" value="ECO:0000318"/>
    <property type="project" value="GO_Central"/>
</dbReference>
<dbReference type="GO" id="GO:0031490">
    <property type="term" value="F:chromatin DNA binding"/>
    <property type="evidence" value="ECO:0000318"/>
    <property type="project" value="GO_Central"/>
</dbReference>
<dbReference type="GO" id="GO:0032454">
    <property type="term" value="F:histone H3K9 demethylase activity"/>
    <property type="evidence" value="ECO:0000318"/>
    <property type="project" value="GO_Central"/>
</dbReference>
<dbReference type="GO" id="GO:0140683">
    <property type="term" value="F:histone H3K9me/H3K9me2 demethylase activity"/>
    <property type="evidence" value="ECO:0007669"/>
    <property type="project" value="UniProtKB-EC"/>
</dbReference>
<dbReference type="GO" id="GO:0003712">
    <property type="term" value="F:transcription coregulator activity"/>
    <property type="evidence" value="ECO:0000318"/>
    <property type="project" value="GO_Central"/>
</dbReference>
<dbReference type="GO" id="GO:0008270">
    <property type="term" value="F:zinc ion binding"/>
    <property type="evidence" value="ECO:0007669"/>
    <property type="project" value="UniProtKB-KW"/>
</dbReference>
<dbReference type="GO" id="GO:0006357">
    <property type="term" value="P:regulation of transcription by RNA polymerase II"/>
    <property type="evidence" value="ECO:0000318"/>
    <property type="project" value="GO_Central"/>
</dbReference>
<dbReference type="FunFam" id="2.60.120.650:FF:000004">
    <property type="entry name" value="Putative lysine-specific demethylase 3B"/>
    <property type="match status" value="1"/>
</dbReference>
<dbReference type="Gene3D" id="2.60.120.650">
    <property type="entry name" value="Cupin"/>
    <property type="match status" value="1"/>
</dbReference>
<dbReference type="InterPro" id="IPR054294">
    <property type="entry name" value="DUF7030"/>
</dbReference>
<dbReference type="InterPro" id="IPR045109">
    <property type="entry name" value="JHDM2-like"/>
</dbReference>
<dbReference type="InterPro" id="IPR003347">
    <property type="entry name" value="JmjC_dom"/>
</dbReference>
<dbReference type="InterPro" id="IPR054503">
    <property type="entry name" value="KDM3AB_Tudor"/>
</dbReference>
<dbReference type="InterPro" id="IPR054504">
    <property type="entry name" value="PWWP_KDM3B"/>
</dbReference>
<dbReference type="PANTHER" id="PTHR12549">
    <property type="entry name" value="JMJC DOMAIN-CONTAINING HISTONE DEMETHYLATION PROTEIN"/>
    <property type="match status" value="1"/>
</dbReference>
<dbReference type="PANTHER" id="PTHR12549:SF7">
    <property type="entry name" value="LYSINE-SPECIFIC DEMETHYLASE 3A"/>
    <property type="match status" value="1"/>
</dbReference>
<dbReference type="Pfam" id="PF22989">
    <property type="entry name" value="DUF7030"/>
    <property type="match status" value="1"/>
</dbReference>
<dbReference type="Pfam" id="PF02373">
    <property type="entry name" value="JmjC"/>
    <property type="match status" value="1"/>
</dbReference>
<dbReference type="Pfam" id="PF22988">
    <property type="entry name" value="PWWP_KDM3B"/>
    <property type="match status" value="1"/>
</dbReference>
<dbReference type="Pfam" id="PF22987">
    <property type="entry name" value="Tudor_KDM3B"/>
    <property type="match status" value="1"/>
</dbReference>
<dbReference type="SMART" id="SM00558">
    <property type="entry name" value="JmjC"/>
    <property type="match status" value="1"/>
</dbReference>
<dbReference type="SUPFAM" id="SSF51197">
    <property type="entry name" value="Clavaminate synthase-like"/>
    <property type="match status" value="1"/>
</dbReference>
<dbReference type="SUPFAM" id="SSF57850">
    <property type="entry name" value="RING/U-box"/>
    <property type="match status" value="1"/>
</dbReference>
<dbReference type="PROSITE" id="PS51184">
    <property type="entry name" value="JMJC"/>
    <property type="match status" value="1"/>
</dbReference>
<name>KDM3A_CHICK</name>
<organism>
    <name type="scientific">Gallus gallus</name>
    <name type="common">Chicken</name>
    <dbReference type="NCBI Taxonomy" id="9031"/>
    <lineage>
        <taxon>Eukaryota</taxon>
        <taxon>Metazoa</taxon>
        <taxon>Chordata</taxon>
        <taxon>Craniata</taxon>
        <taxon>Vertebrata</taxon>
        <taxon>Euteleostomi</taxon>
        <taxon>Archelosauria</taxon>
        <taxon>Archosauria</taxon>
        <taxon>Dinosauria</taxon>
        <taxon>Saurischia</taxon>
        <taxon>Theropoda</taxon>
        <taxon>Coelurosauria</taxon>
        <taxon>Aves</taxon>
        <taxon>Neognathae</taxon>
        <taxon>Galloanserae</taxon>
        <taxon>Galliformes</taxon>
        <taxon>Phasianidae</taxon>
        <taxon>Phasianinae</taxon>
        <taxon>Gallus</taxon>
    </lineage>
</organism>
<evidence type="ECO:0000250" key="1"/>
<evidence type="ECO:0000250" key="2">
    <source>
        <dbReference type="UniProtKB" id="Q9Y4C1"/>
    </source>
</evidence>
<evidence type="ECO:0000255" key="3"/>
<evidence type="ECO:0000255" key="4">
    <source>
        <dbReference type="PROSITE-ProRule" id="PRU00538"/>
    </source>
</evidence>
<evidence type="ECO:0000256" key="5">
    <source>
        <dbReference type="SAM" id="MobiDB-lite"/>
    </source>
</evidence>
<evidence type="ECO:0000305" key="6"/>
<comment type="function">
    <text evidence="1">Histone demethylase that specifically demethylates 'Lys-9' of histone H3, thereby playing a central role in histone code. Preferentially demethylates mono- and dimethylated H3 'Lys-9' residue, with a preference for dimethylated residue, while it has weak or no activity on trimethylated H3 'Lys-9'. Demethylation of Lys residue generates formaldehyde and succinate (By similarity).</text>
</comment>
<comment type="catalytic activity">
    <reaction evidence="2">
        <text>N(6),N(6)-dimethyl-L-lysyl(9)-[histone H3] + 2 2-oxoglutarate + 2 O2 = L-lysyl(9)-[histone H3] + 2 formaldehyde + 2 succinate + 2 CO2</text>
        <dbReference type="Rhea" id="RHEA:60188"/>
        <dbReference type="Rhea" id="RHEA-COMP:15541"/>
        <dbReference type="Rhea" id="RHEA-COMP:15546"/>
        <dbReference type="ChEBI" id="CHEBI:15379"/>
        <dbReference type="ChEBI" id="CHEBI:16526"/>
        <dbReference type="ChEBI" id="CHEBI:16810"/>
        <dbReference type="ChEBI" id="CHEBI:16842"/>
        <dbReference type="ChEBI" id="CHEBI:29969"/>
        <dbReference type="ChEBI" id="CHEBI:30031"/>
        <dbReference type="ChEBI" id="CHEBI:61976"/>
        <dbReference type="EC" id="1.14.11.65"/>
    </reaction>
</comment>
<comment type="cofactor">
    <cofactor evidence="1">
        <name>Fe(2+)</name>
        <dbReference type="ChEBI" id="CHEBI:29033"/>
    </cofactor>
    <text evidence="1">Binds 1 Fe(2+) ion per subunit.</text>
</comment>
<comment type="subcellular location">
    <subcellularLocation>
        <location evidence="1">Cytoplasm</location>
    </subcellularLocation>
    <subcellularLocation>
        <location evidence="1">Nucleus</location>
    </subcellularLocation>
</comment>
<comment type="domain">
    <text evidence="1">The JmjC domain and the C6-type zinc-finger are required for the demethylation activity.</text>
</comment>
<comment type="domain">
    <text evidence="1">Leu-Xaa-Xaa-Leu-Leu (LXXLL) motifs are known to mediate the association with nuclear receptors.</text>
</comment>
<comment type="similarity">
    <text evidence="6">Belongs to the JHDM2 histone demethylase family.</text>
</comment>